<comment type="function">
    <text evidence="1">One of the primary rRNA binding proteins, it binds directly near the 3'-end of the 23S rRNA, where it nucleates assembly of the 50S subunit.</text>
</comment>
<comment type="subunit">
    <text evidence="1">Part of the 50S ribosomal subunit. Forms a cluster with proteins L14 and L19.</text>
</comment>
<comment type="similarity">
    <text evidence="1">Belongs to the universal ribosomal protein uL3 family.</text>
</comment>
<name>RL3_CORU7</name>
<sequence>MSDIEIKGILGKKLGMTQIFDDENRVVPVTVVEAGPCVVTQVRTKDIDGYEAVQIAFGEIDPRKVNKPESGHFKKAGVTPRRHVAEIRVADASGYEVGQDVTVEIFNEVDFVDVTGTSKGHGFAGGMKRHGFAGQGAAHGNQAAHRRVGGIGGAATPGRVFKGKRMAGRMGNNRVTMQNLKVAKVDTDSNLLLIKGAVPGINGGIVVVKTAVKGGAKA</sequence>
<keyword id="KW-1185">Reference proteome</keyword>
<keyword id="KW-0687">Ribonucleoprotein</keyword>
<keyword id="KW-0689">Ribosomal protein</keyword>
<keyword id="KW-0694">RNA-binding</keyword>
<keyword id="KW-0699">rRNA-binding</keyword>
<organism>
    <name type="scientific">Corynebacterium urealyticum (strain ATCC 43042 / DSM 7109)</name>
    <dbReference type="NCBI Taxonomy" id="504474"/>
    <lineage>
        <taxon>Bacteria</taxon>
        <taxon>Bacillati</taxon>
        <taxon>Actinomycetota</taxon>
        <taxon>Actinomycetes</taxon>
        <taxon>Mycobacteriales</taxon>
        <taxon>Corynebacteriaceae</taxon>
        <taxon>Corynebacterium</taxon>
    </lineage>
</organism>
<proteinExistence type="inferred from homology"/>
<feature type="chain" id="PRO_1000141848" description="Large ribosomal subunit protein uL3">
    <location>
        <begin position="1"/>
        <end position="218"/>
    </location>
</feature>
<evidence type="ECO:0000255" key="1">
    <source>
        <dbReference type="HAMAP-Rule" id="MF_01325"/>
    </source>
</evidence>
<evidence type="ECO:0000305" key="2"/>
<dbReference type="EMBL" id="AM942444">
    <property type="protein sequence ID" value="CAQ04275.1"/>
    <property type="molecule type" value="Genomic_DNA"/>
</dbReference>
<dbReference type="RefSeq" id="WP_012359575.1">
    <property type="nucleotide sequence ID" value="NC_010545.1"/>
</dbReference>
<dbReference type="SMR" id="B1VET6"/>
<dbReference type="STRING" id="504474.cu0315"/>
<dbReference type="GeneID" id="60605118"/>
<dbReference type="KEGG" id="cur:cu0315"/>
<dbReference type="eggNOG" id="COG0087">
    <property type="taxonomic scope" value="Bacteria"/>
</dbReference>
<dbReference type="HOGENOM" id="CLU_044142_4_1_11"/>
<dbReference type="Proteomes" id="UP000001727">
    <property type="component" value="Chromosome"/>
</dbReference>
<dbReference type="GO" id="GO:0022625">
    <property type="term" value="C:cytosolic large ribosomal subunit"/>
    <property type="evidence" value="ECO:0007669"/>
    <property type="project" value="TreeGrafter"/>
</dbReference>
<dbReference type="GO" id="GO:0019843">
    <property type="term" value="F:rRNA binding"/>
    <property type="evidence" value="ECO:0007669"/>
    <property type="project" value="UniProtKB-UniRule"/>
</dbReference>
<dbReference type="GO" id="GO:0003735">
    <property type="term" value="F:structural constituent of ribosome"/>
    <property type="evidence" value="ECO:0007669"/>
    <property type="project" value="InterPro"/>
</dbReference>
<dbReference type="GO" id="GO:0006412">
    <property type="term" value="P:translation"/>
    <property type="evidence" value="ECO:0007669"/>
    <property type="project" value="UniProtKB-UniRule"/>
</dbReference>
<dbReference type="FunFam" id="2.40.30.10:FF:000004">
    <property type="entry name" value="50S ribosomal protein L3"/>
    <property type="match status" value="1"/>
</dbReference>
<dbReference type="FunFam" id="3.30.160.810:FF:000003">
    <property type="entry name" value="50S ribosomal protein L3"/>
    <property type="match status" value="1"/>
</dbReference>
<dbReference type="Gene3D" id="3.30.160.810">
    <property type="match status" value="1"/>
</dbReference>
<dbReference type="Gene3D" id="2.40.30.10">
    <property type="entry name" value="Translation factors"/>
    <property type="match status" value="1"/>
</dbReference>
<dbReference type="HAMAP" id="MF_01325_B">
    <property type="entry name" value="Ribosomal_uL3_B"/>
    <property type="match status" value="1"/>
</dbReference>
<dbReference type="InterPro" id="IPR000597">
    <property type="entry name" value="Ribosomal_uL3"/>
</dbReference>
<dbReference type="InterPro" id="IPR019927">
    <property type="entry name" value="Ribosomal_uL3_bac/org-type"/>
</dbReference>
<dbReference type="InterPro" id="IPR019926">
    <property type="entry name" value="Ribosomal_uL3_CS"/>
</dbReference>
<dbReference type="InterPro" id="IPR009000">
    <property type="entry name" value="Transl_B-barrel_sf"/>
</dbReference>
<dbReference type="NCBIfam" id="TIGR03625">
    <property type="entry name" value="L3_bact"/>
    <property type="match status" value="1"/>
</dbReference>
<dbReference type="PANTHER" id="PTHR11229">
    <property type="entry name" value="50S RIBOSOMAL PROTEIN L3"/>
    <property type="match status" value="1"/>
</dbReference>
<dbReference type="PANTHER" id="PTHR11229:SF16">
    <property type="entry name" value="LARGE RIBOSOMAL SUBUNIT PROTEIN UL3C"/>
    <property type="match status" value="1"/>
</dbReference>
<dbReference type="Pfam" id="PF00297">
    <property type="entry name" value="Ribosomal_L3"/>
    <property type="match status" value="1"/>
</dbReference>
<dbReference type="SUPFAM" id="SSF50447">
    <property type="entry name" value="Translation proteins"/>
    <property type="match status" value="1"/>
</dbReference>
<dbReference type="PROSITE" id="PS00474">
    <property type="entry name" value="RIBOSOMAL_L3"/>
    <property type="match status" value="1"/>
</dbReference>
<gene>
    <name evidence="1" type="primary">rplC</name>
    <name type="ordered locus">cu0315</name>
</gene>
<reference key="1">
    <citation type="journal article" date="2008" name="J. Biotechnol.">
        <title>The lifestyle of Corynebacterium urealyticum derived from its complete genome sequence established by pyrosequencing.</title>
        <authorList>
            <person name="Tauch A."/>
            <person name="Trost E."/>
            <person name="Tilker A."/>
            <person name="Ludewig U."/>
            <person name="Schneiker S."/>
            <person name="Goesmann A."/>
            <person name="Arnold W."/>
            <person name="Bekel T."/>
            <person name="Brinkrolf K."/>
            <person name="Brune I."/>
            <person name="Goetker S."/>
            <person name="Kalinowski J."/>
            <person name="Kamp P.-B."/>
            <person name="Lobo F.P."/>
            <person name="Viehoever P."/>
            <person name="Weisshaar B."/>
            <person name="Soriano F."/>
            <person name="Droege M."/>
            <person name="Puehler A."/>
        </authorList>
    </citation>
    <scope>NUCLEOTIDE SEQUENCE [LARGE SCALE GENOMIC DNA]</scope>
    <source>
        <strain>ATCC 43042 / DSM 7109</strain>
    </source>
</reference>
<accession>B1VET6</accession>
<protein>
    <recommendedName>
        <fullName evidence="1">Large ribosomal subunit protein uL3</fullName>
    </recommendedName>
    <alternativeName>
        <fullName evidence="2">50S ribosomal protein L3</fullName>
    </alternativeName>
</protein>